<evidence type="ECO:0000250" key="1">
    <source>
        <dbReference type="UniProtKB" id="P02628"/>
    </source>
</evidence>
<evidence type="ECO:0000255" key="2">
    <source>
        <dbReference type="PROSITE-ProRule" id="PRU00448"/>
    </source>
</evidence>
<evidence type="ECO:0000269" key="3">
    <source>
    </source>
</evidence>
<evidence type="ECO:0000305" key="4"/>
<dbReference type="Allergome" id="263">
    <property type="allergen name" value="Cyp c 1"/>
</dbReference>
<dbReference type="iPTMnet" id="P09227"/>
<dbReference type="Proteomes" id="UP000694384">
    <property type="component" value="Unplaced"/>
</dbReference>
<dbReference type="Proteomes" id="UP000694427">
    <property type="component" value="Unplaced"/>
</dbReference>
<dbReference type="Proteomes" id="UP000694700">
    <property type="component" value="Unplaced"/>
</dbReference>
<dbReference type="Proteomes" id="UP000694701">
    <property type="component" value="Unplaced"/>
</dbReference>
<dbReference type="Proteomes" id="UP001155660">
    <property type="component" value="Unplaced"/>
</dbReference>
<dbReference type="GO" id="GO:0005737">
    <property type="term" value="C:cytoplasm"/>
    <property type="evidence" value="ECO:0007669"/>
    <property type="project" value="TreeGrafter"/>
</dbReference>
<dbReference type="GO" id="GO:0005509">
    <property type="term" value="F:calcium ion binding"/>
    <property type="evidence" value="ECO:0007669"/>
    <property type="project" value="InterPro"/>
</dbReference>
<dbReference type="CDD" id="cd16255">
    <property type="entry name" value="EFh_parvalbumin_beta"/>
    <property type="match status" value="1"/>
</dbReference>
<dbReference type="FunFam" id="1.10.238.10:FF:000060">
    <property type="entry name" value="Parvalbumin, thymic"/>
    <property type="match status" value="1"/>
</dbReference>
<dbReference type="Gene3D" id="1.10.238.10">
    <property type="entry name" value="EF-hand"/>
    <property type="match status" value="1"/>
</dbReference>
<dbReference type="InterPro" id="IPR011992">
    <property type="entry name" value="EF-hand-dom_pair"/>
</dbReference>
<dbReference type="InterPro" id="IPR018247">
    <property type="entry name" value="EF_Hand_1_Ca_BS"/>
</dbReference>
<dbReference type="InterPro" id="IPR002048">
    <property type="entry name" value="EF_hand_dom"/>
</dbReference>
<dbReference type="InterPro" id="IPR008080">
    <property type="entry name" value="Parvalbumin"/>
</dbReference>
<dbReference type="PANTHER" id="PTHR11653:SF12">
    <property type="entry name" value="PARVALBUMIN"/>
    <property type="match status" value="1"/>
</dbReference>
<dbReference type="PANTHER" id="PTHR11653">
    <property type="entry name" value="PARVALBUMIN ALPHA"/>
    <property type="match status" value="1"/>
</dbReference>
<dbReference type="Pfam" id="PF13499">
    <property type="entry name" value="EF-hand_7"/>
    <property type="match status" value="1"/>
</dbReference>
<dbReference type="PRINTS" id="PR01697">
    <property type="entry name" value="PARVALBUMIN"/>
</dbReference>
<dbReference type="SMART" id="SM00054">
    <property type="entry name" value="EFh"/>
    <property type="match status" value="2"/>
</dbReference>
<dbReference type="SUPFAM" id="SSF47473">
    <property type="entry name" value="EF-hand"/>
    <property type="match status" value="1"/>
</dbReference>
<dbReference type="PROSITE" id="PS00018">
    <property type="entry name" value="EF_HAND_1"/>
    <property type="match status" value="2"/>
</dbReference>
<dbReference type="PROSITE" id="PS50222">
    <property type="entry name" value="EF_HAND_2"/>
    <property type="match status" value="2"/>
</dbReference>
<protein>
    <recommendedName>
        <fullName>Parvalbumin alpha</fullName>
    </recommendedName>
    <alternativeName>
        <fullName>A1</fullName>
    </alternativeName>
</protein>
<comment type="function">
    <text>In muscle, parvalbumin is thought to be involved in relaxation after contraction. It binds two calcium ions.</text>
</comment>
<comment type="miscellaneous">
    <text>This parvalbumin has an isoelectric point of 4.47.</text>
</comment>
<comment type="similarity">
    <text evidence="4">Belongs to the parvalbumin family.</text>
</comment>
<sequence length="109" mass="11451">MAYGGILNDADITAALEACXAXDSFNAKSFFAKVGLSAKTPDDIKKAFAVIDQDKSGFIEEDELKLFLQNFSAGARALTDAETKAFLKAGDSDGDGKIGVDEFAALVKA</sequence>
<accession>P09227</accession>
<organism>
    <name type="scientific">Cyprinus carpio</name>
    <name type="common">Common carp</name>
    <dbReference type="NCBI Taxonomy" id="7962"/>
    <lineage>
        <taxon>Eukaryota</taxon>
        <taxon>Metazoa</taxon>
        <taxon>Chordata</taxon>
        <taxon>Craniata</taxon>
        <taxon>Vertebrata</taxon>
        <taxon>Euteleostomi</taxon>
        <taxon>Actinopterygii</taxon>
        <taxon>Neopterygii</taxon>
        <taxon>Teleostei</taxon>
        <taxon>Ostariophysi</taxon>
        <taxon>Cypriniformes</taxon>
        <taxon>Cyprinidae</taxon>
        <taxon>Cyprininae</taxon>
        <taxon>Cyprinus</taxon>
    </lineage>
</organism>
<proteinExistence type="evidence at protein level"/>
<feature type="initiator methionine" description="Removed" evidence="3">
    <location>
        <position position="1"/>
    </location>
</feature>
<feature type="chain" id="PRO_0000073594" description="Parvalbumin alpha">
    <location>
        <begin position="2"/>
        <end position="109"/>
    </location>
</feature>
<feature type="domain" description="EF-hand 1" evidence="2">
    <location>
        <begin position="39"/>
        <end position="74"/>
    </location>
</feature>
<feature type="domain" description="EF-hand 2" evidence="2">
    <location>
        <begin position="78"/>
        <end position="109"/>
    </location>
</feature>
<feature type="binding site" evidence="2">
    <location>
        <position position="52"/>
    </location>
    <ligand>
        <name>Ca(2+)</name>
        <dbReference type="ChEBI" id="CHEBI:29108"/>
        <label>1</label>
    </ligand>
</feature>
<feature type="binding site" evidence="2">
    <location>
        <position position="54"/>
    </location>
    <ligand>
        <name>Ca(2+)</name>
        <dbReference type="ChEBI" id="CHEBI:29108"/>
        <label>1</label>
    </ligand>
</feature>
<feature type="binding site" evidence="2">
    <location>
        <position position="56"/>
    </location>
    <ligand>
        <name>Ca(2+)</name>
        <dbReference type="ChEBI" id="CHEBI:29108"/>
        <label>1</label>
    </ligand>
</feature>
<feature type="binding site" evidence="1">
    <location>
        <position position="58"/>
    </location>
    <ligand>
        <name>Ca(2+)</name>
        <dbReference type="ChEBI" id="CHEBI:29108"/>
        <label>1</label>
    </ligand>
</feature>
<feature type="binding site" evidence="1">
    <location>
        <position position="60"/>
    </location>
    <ligand>
        <name>Ca(2+)</name>
        <dbReference type="ChEBI" id="CHEBI:29108"/>
        <label>1</label>
    </ligand>
</feature>
<feature type="binding site" evidence="2">
    <location>
        <position position="63"/>
    </location>
    <ligand>
        <name>Ca(2+)</name>
        <dbReference type="ChEBI" id="CHEBI:29108"/>
        <label>1</label>
    </ligand>
</feature>
<feature type="binding site" evidence="2">
    <location>
        <position position="91"/>
    </location>
    <ligand>
        <name>Ca(2+)</name>
        <dbReference type="ChEBI" id="CHEBI:29108"/>
        <label>2</label>
    </ligand>
</feature>
<feature type="binding site" evidence="2">
    <location>
        <position position="93"/>
    </location>
    <ligand>
        <name>Ca(2+)</name>
        <dbReference type="ChEBI" id="CHEBI:29108"/>
        <label>2</label>
    </ligand>
</feature>
<feature type="binding site" evidence="2">
    <location>
        <position position="95"/>
    </location>
    <ligand>
        <name>Ca(2+)</name>
        <dbReference type="ChEBI" id="CHEBI:29108"/>
        <label>2</label>
    </ligand>
</feature>
<feature type="binding site" evidence="2">
    <location>
        <position position="97"/>
    </location>
    <ligand>
        <name>Ca(2+)</name>
        <dbReference type="ChEBI" id="CHEBI:29108"/>
        <label>2</label>
    </ligand>
</feature>
<feature type="binding site" evidence="2">
    <location>
        <position position="102"/>
    </location>
    <ligand>
        <name>Ca(2+)</name>
        <dbReference type="ChEBI" id="CHEBI:29108"/>
        <label>2</label>
    </ligand>
</feature>
<feature type="modified residue" description="N-acetylalanine" evidence="3">
    <location>
        <position position="2"/>
    </location>
</feature>
<name>PRVA_CYPCA</name>
<keyword id="KW-0007">Acetylation</keyword>
<keyword id="KW-0106">Calcium</keyword>
<keyword id="KW-0903">Direct protein sequencing</keyword>
<keyword id="KW-0479">Metal-binding</keyword>
<keyword id="KW-0514">Muscle protein</keyword>
<keyword id="KW-1185">Reference proteome</keyword>
<keyword id="KW-0677">Repeat</keyword>
<reference key="1">
    <citation type="journal article" date="1974" name="Adv. Exp. Med. Biol.">
        <title>The coordination of calcium ions by carp muscle calcium binding proteins A, B and C.</title>
        <authorList>
            <person name="Coffee C.J."/>
            <person name="Bradshaw R.A."/>
            <person name="Kretsinger R.H."/>
        </authorList>
    </citation>
    <scope>PROTEIN SEQUENCE OF 2-109</scope>
    <scope>ACETYLATION AT ALA-2</scope>
</reference>
<reference key="2">
    <citation type="journal article" date="1984" name="J. Biochem.">
        <title>Static and kinetic studies on carp muscle parvalbumins.</title>
        <authorList>
            <person name="Iio T."/>
            <person name="Hoshihara Y."/>
        </authorList>
    </citation>
    <scope>CALCIUM-BINDING</scope>
</reference>